<proteinExistence type="evidence at protein level"/>
<comment type="function">
    <text>Collagen type IV is specific for basement membranes.</text>
</comment>
<comment type="subunit">
    <text>Trimers of two alpha 1(IV) and one alpha 2(IV) chain. Type IV collagen forms a mesh-like network linked through intermolecular interactions between 7S domains and between NC1 domains.</text>
</comment>
<comment type="interaction">
    <interactant intactId="EBI-109669">
        <id>P08120</id>
    </interactant>
    <interactant intactId="EBI-499422">
        <id>P07713</id>
        <label>dpp</label>
    </interactant>
    <organismsDiffer>false</organismsDiffer>
    <experiments>3</experiments>
</comment>
<comment type="subcellular location">
    <subcellularLocation>
        <location>Secreted</location>
        <location>Extracellular space</location>
        <location>Extracellular matrix</location>
        <location>Basement membrane</location>
    </subcellularLocation>
</comment>
<comment type="domain">
    <text>Alpha chains of type IV collagen have a non-collagenous domain (NC1) at their C-terminus, frequent interruptions of the G-X-Y repeats in the long central triple-helical domain (which may cause flexibility in the triple helix), and a short N-terminal triple-helical 7S domain.</text>
</comment>
<comment type="PTM">
    <text>Prolines at the third position of the tripeptide repeating unit (G-X-Y) are hydroxylated in some or all of the chains.</text>
</comment>
<comment type="PTM">
    <text>Type IV collagens contain numerous cysteine residues which are involved in inter- and intramolecular disulfide bonding. 12 of these, located in the NC1 domain, are conserved in all known type IV collagens.</text>
</comment>
<comment type="similarity">
    <text evidence="2">Belongs to the type IV collagen family.</text>
</comment>
<keyword id="KW-0002">3D-structure</keyword>
<keyword id="KW-0084">Basement membrane</keyword>
<keyword id="KW-0176">Collagen</keyword>
<keyword id="KW-1015">Disulfide bond</keyword>
<keyword id="KW-0272">Extracellular matrix</keyword>
<keyword id="KW-0325">Glycoprotein</keyword>
<keyword id="KW-0379">Hydroxylation</keyword>
<keyword id="KW-1185">Reference proteome</keyword>
<keyword id="KW-0677">Repeat</keyword>
<keyword id="KW-0964">Secreted</keyword>
<keyword id="KW-0732">Signal</keyword>
<organism>
    <name type="scientific">Drosophila melanogaster</name>
    <name type="common">Fruit fly</name>
    <dbReference type="NCBI Taxonomy" id="7227"/>
    <lineage>
        <taxon>Eukaryota</taxon>
        <taxon>Metazoa</taxon>
        <taxon>Ecdysozoa</taxon>
        <taxon>Arthropoda</taxon>
        <taxon>Hexapoda</taxon>
        <taxon>Insecta</taxon>
        <taxon>Pterygota</taxon>
        <taxon>Neoptera</taxon>
        <taxon>Endopterygota</taxon>
        <taxon>Diptera</taxon>
        <taxon>Brachycera</taxon>
        <taxon>Muscomorpha</taxon>
        <taxon>Ephydroidea</taxon>
        <taxon>Drosophilidae</taxon>
        <taxon>Drosophila</taxon>
        <taxon>Sophophora</taxon>
    </lineage>
</organism>
<dbReference type="EMBL" id="J02727">
    <property type="protein sequence ID" value="AAA28423.1"/>
    <property type="molecule type" value="mRNA"/>
</dbReference>
<dbReference type="EMBL" id="M23704">
    <property type="protein sequence ID" value="AAA28404.1"/>
    <property type="molecule type" value="mRNA"/>
</dbReference>
<dbReference type="EMBL" id="M96575">
    <property type="protein sequence ID" value="AAB59184.1"/>
    <property type="molecule type" value="Genomic_DNA"/>
</dbReference>
<dbReference type="EMBL" id="AE014134">
    <property type="protein sequence ID" value="AAF52204.1"/>
    <property type="molecule type" value="Genomic_DNA"/>
</dbReference>
<dbReference type="EMBL" id="AE014134">
    <property type="protein sequence ID" value="AAN10519.1"/>
    <property type="molecule type" value="Genomic_DNA"/>
</dbReference>
<dbReference type="EMBL" id="AE014134">
    <property type="protein sequence ID" value="AAN10520.1"/>
    <property type="molecule type" value="Genomic_DNA"/>
</dbReference>
<dbReference type="EMBL" id="V00200">
    <property type="protein sequence ID" value="CAA23486.2"/>
    <property type="molecule type" value="Genomic_DNA"/>
</dbReference>
<dbReference type="EMBL" id="M28334">
    <property type="protein sequence ID" value="AAA28422.1"/>
    <property type="molecule type" value="mRNA"/>
</dbReference>
<dbReference type="PIR" id="A31893">
    <property type="entry name" value="A31893"/>
</dbReference>
<dbReference type="RefSeq" id="NP_723044.1">
    <property type="nucleotide sequence ID" value="NM_164615.2"/>
</dbReference>
<dbReference type="RefSeq" id="NP_723045.1">
    <property type="nucleotide sequence ID" value="NM_164616.2"/>
</dbReference>
<dbReference type="RefSeq" id="NP_723046.1">
    <property type="nucleotide sequence ID" value="NM_164617.2"/>
</dbReference>
<dbReference type="PDB" id="8TXN">
    <property type="method" value="X-ray"/>
    <property type="resolution" value="1.75 A"/>
    <property type="chains" value="A/D=1550-1779"/>
</dbReference>
<dbReference type="PDB" id="8TYS">
    <property type="method" value="X-ray"/>
    <property type="resolution" value="2.90 A"/>
    <property type="chains" value="A/C/D/F=1550-1779"/>
</dbReference>
<dbReference type="PDBsum" id="8TXN"/>
<dbReference type="PDBsum" id="8TYS"/>
<dbReference type="SMR" id="P08120"/>
<dbReference type="BioGRID" id="59908">
    <property type="interactions" value="17"/>
</dbReference>
<dbReference type="DIP" id="DIP-59819N"/>
<dbReference type="FunCoup" id="P08120">
    <property type="interactions" value="50"/>
</dbReference>
<dbReference type="IntAct" id="P08120">
    <property type="interactions" value="53"/>
</dbReference>
<dbReference type="STRING" id="7227.FBpp0078641"/>
<dbReference type="GlyCosmos" id="P08120">
    <property type="glycosylation" value="1 site, No reported glycans"/>
</dbReference>
<dbReference type="GlyGen" id="P08120">
    <property type="glycosylation" value="7 sites, 1 O-linked glycan (1 site)"/>
</dbReference>
<dbReference type="PaxDb" id="7227-FBpp0078641"/>
<dbReference type="EnsemblMetazoa" id="FBtr0079001">
    <property type="protein sequence ID" value="FBpp0078640"/>
    <property type="gene ID" value="FBgn0000299"/>
</dbReference>
<dbReference type="EnsemblMetazoa" id="FBtr0079002">
    <property type="protein sequence ID" value="FBpp0078641"/>
    <property type="gene ID" value="FBgn0000299"/>
</dbReference>
<dbReference type="EnsemblMetazoa" id="FBtr0079003">
    <property type="protein sequence ID" value="FBpp0078642"/>
    <property type="gene ID" value="FBgn0000299"/>
</dbReference>
<dbReference type="GeneID" id="33727"/>
<dbReference type="KEGG" id="dme:Dmel_CG4145"/>
<dbReference type="AGR" id="FB:FBgn0000299"/>
<dbReference type="CTD" id="1282"/>
<dbReference type="FlyBase" id="FBgn0000299">
    <property type="gene designation" value="Col4a1"/>
</dbReference>
<dbReference type="VEuPathDB" id="VectorBase:FBgn0000299"/>
<dbReference type="eggNOG" id="KOG3544">
    <property type="taxonomic scope" value="Eukaryota"/>
</dbReference>
<dbReference type="GeneTree" id="ENSGT00940000164160"/>
<dbReference type="HOGENOM" id="CLU_002023_1_0_1"/>
<dbReference type="InParanoid" id="P08120"/>
<dbReference type="OMA" id="TCSNNES"/>
<dbReference type="OrthoDB" id="10071882at2759"/>
<dbReference type="PhylomeDB" id="P08120"/>
<dbReference type="Reactome" id="R-DME-1442490">
    <property type="pathway name" value="Collagen degradation"/>
</dbReference>
<dbReference type="Reactome" id="R-DME-1650814">
    <property type="pathway name" value="Collagen biosynthesis and modifying enzymes"/>
</dbReference>
<dbReference type="Reactome" id="R-DME-216083">
    <property type="pathway name" value="Integrin cell surface interactions"/>
</dbReference>
<dbReference type="Reactome" id="R-DME-8948216">
    <property type="pathway name" value="Collagen chain trimerization"/>
</dbReference>
<dbReference type="SignaLink" id="P08120"/>
<dbReference type="BioGRID-ORCS" id="33727">
    <property type="hits" value="0 hits in 3 CRISPR screens"/>
</dbReference>
<dbReference type="ChiTaRS" id="Cg25C">
    <property type="organism name" value="fly"/>
</dbReference>
<dbReference type="GenomeRNAi" id="33727"/>
<dbReference type="PRO" id="PR:P08120"/>
<dbReference type="Proteomes" id="UP000000803">
    <property type="component" value="Chromosome 2L"/>
</dbReference>
<dbReference type="Bgee" id="FBgn0000299">
    <property type="expression patterns" value="Expressed in hemocyte (sensu Nematoda and Protostomia) in imaginal disc-derived wing and 125 other cell types or tissues"/>
</dbReference>
<dbReference type="ExpressionAtlas" id="P08120">
    <property type="expression patterns" value="baseline and differential"/>
</dbReference>
<dbReference type="GO" id="GO:0005604">
    <property type="term" value="C:basement membrane"/>
    <property type="evidence" value="ECO:0000314"/>
    <property type="project" value="FlyBase"/>
</dbReference>
<dbReference type="GO" id="GO:0005587">
    <property type="term" value="C:collagen type IV trimer"/>
    <property type="evidence" value="ECO:0000304"/>
    <property type="project" value="FlyBase"/>
</dbReference>
<dbReference type="GO" id="GO:0062023">
    <property type="term" value="C:collagen-containing extracellular matrix"/>
    <property type="evidence" value="ECO:0000318"/>
    <property type="project" value="GO_Central"/>
</dbReference>
<dbReference type="GO" id="GO:0005615">
    <property type="term" value="C:extracellular space"/>
    <property type="evidence" value="ECO:0000318"/>
    <property type="project" value="GO_Central"/>
</dbReference>
<dbReference type="GO" id="GO:0005201">
    <property type="term" value="F:extracellular matrix structural constituent"/>
    <property type="evidence" value="ECO:0000315"/>
    <property type="project" value="FlyBase"/>
</dbReference>
<dbReference type="GO" id="GO:0030020">
    <property type="term" value="F:extracellular matrix structural constituent conferring tensile strength"/>
    <property type="evidence" value="ECO:0000318"/>
    <property type="project" value="GO_Central"/>
</dbReference>
<dbReference type="GO" id="GO:0071711">
    <property type="term" value="P:basement membrane organization"/>
    <property type="evidence" value="ECO:0000315"/>
    <property type="project" value="FlyBase"/>
</dbReference>
<dbReference type="GO" id="GO:0055013">
    <property type="term" value="P:cardiac muscle cell development"/>
    <property type="evidence" value="ECO:0000315"/>
    <property type="project" value="FlyBase"/>
</dbReference>
<dbReference type="GO" id="GO:0007391">
    <property type="term" value="P:dorsal closure"/>
    <property type="evidence" value="ECO:0000304"/>
    <property type="project" value="FlyBase"/>
</dbReference>
<dbReference type="GO" id="GO:0060729">
    <property type="term" value="P:intestinal epithelial structure maintenance"/>
    <property type="evidence" value="ECO:0000315"/>
    <property type="project" value="FlyBase"/>
</dbReference>
<dbReference type="GO" id="GO:0048621">
    <property type="term" value="P:post-embryonic digestive tract morphogenesis"/>
    <property type="evidence" value="ECO:0000315"/>
    <property type="project" value="FlyBase"/>
</dbReference>
<dbReference type="FunFam" id="2.170.240.10:FF:000001">
    <property type="entry name" value="Collagen IV alpha 1 chain"/>
    <property type="match status" value="1"/>
</dbReference>
<dbReference type="Gene3D" id="2.170.240.10">
    <property type="entry name" value="Collagen IV, non-collagenous"/>
    <property type="match status" value="1"/>
</dbReference>
<dbReference type="InterPro" id="IPR008160">
    <property type="entry name" value="Collagen"/>
</dbReference>
<dbReference type="InterPro" id="IPR001442">
    <property type="entry name" value="Collagen_IV_NC"/>
</dbReference>
<dbReference type="InterPro" id="IPR036954">
    <property type="entry name" value="Collagen_IV_NC_sf"/>
</dbReference>
<dbReference type="InterPro" id="IPR050149">
    <property type="entry name" value="Collagen_superfamily"/>
</dbReference>
<dbReference type="InterPro" id="IPR016187">
    <property type="entry name" value="CTDL_fold"/>
</dbReference>
<dbReference type="PANTHER" id="PTHR24023">
    <property type="entry name" value="COLLAGEN ALPHA"/>
    <property type="match status" value="1"/>
</dbReference>
<dbReference type="PANTHER" id="PTHR24023:SF914">
    <property type="entry name" value="OTOLIN-1"/>
    <property type="match status" value="1"/>
</dbReference>
<dbReference type="Pfam" id="PF01413">
    <property type="entry name" value="C4"/>
    <property type="match status" value="2"/>
</dbReference>
<dbReference type="Pfam" id="PF01391">
    <property type="entry name" value="Collagen"/>
    <property type="match status" value="14"/>
</dbReference>
<dbReference type="SMART" id="SM00111">
    <property type="entry name" value="C4"/>
    <property type="match status" value="2"/>
</dbReference>
<dbReference type="SUPFAM" id="SSF56436">
    <property type="entry name" value="C-type lectin-like"/>
    <property type="match status" value="2"/>
</dbReference>
<dbReference type="PROSITE" id="PS51403">
    <property type="entry name" value="NC1_IV"/>
    <property type="match status" value="1"/>
</dbReference>
<protein>
    <recommendedName>
        <fullName evidence="4">Collagen alpha-1(IV) chain</fullName>
    </recommendedName>
    <alternativeName>
        <fullName evidence="7">Collagen type IV alpha 1</fullName>
    </alternativeName>
</protein>
<feature type="signal peptide">
    <location>
        <begin position="1"/>
        <end position="23"/>
    </location>
</feature>
<feature type="propeptide" id="PRO_0000005754" description="N-terminal propeptide (7S domain)">
    <location>
        <begin position="24"/>
        <end status="unknown"/>
    </location>
</feature>
<feature type="chain" id="PRO_0000005755" description="Collagen alpha-1(IV) chain">
    <location>
        <begin status="unknown"/>
        <end position="1779"/>
    </location>
</feature>
<feature type="domain" description="Collagen IV NC1" evidence="2">
    <location>
        <begin position="1555"/>
        <end position="1778"/>
    </location>
</feature>
<feature type="region of interest" description="Disordered" evidence="3">
    <location>
        <begin position="89"/>
        <end position="643"/>
    </location>
</feature>
<feature type="region of interest" description="Disordered" evidence="3">
    <location>
        <begin position="655"/>
        <end position="1187"/>
    </location>
</feature>
<feature type="region of interest" description="Disordered" evidence="3">
    <location>
        <begin position="1200"/>
        <end position="1285"/>
    </location>
</feature>
<feature type="region of interest" description="Disordered" evidence="3">
    <location>
        <begin position="1336"/>
        <end position="1530"/>
    </location>
</feature>
<feature type="region of interest" description="Triple-helical region">
    <location>
        <begin status="unknown"/>
        <end position="1545"/>
    </location>
</feature>
<feature type="compositionally biased region" description="Low complexity" evidence="3">
    <location>
        <begin position="144"/>
        <end position="163"/>
    </location>
</feature>
<feature type="compositionally biased region" description="Basic and acidic residues" evidence="3">
    <location>
        <begin position="196"/>
        <end position="217"/>
    </location>
</feature>
<feature type="compositionally biased region" description="Basic and acidic residues" evidence="3">
    <location>
        <begin position="249"/>
        <end position="259"/>
    </location>
</feature>
<feature type="compositionally biased region" description="Low complexity" evidence="3">
    <location>
        <begin position="360"/>
        <end position="369"/>
    </location>
</feature>
<feature type="compositionally biased region" description="Gly residues" evidence="3">
    <location>
        <begin position="434"/>
        <end position="443"/>
    </location>
</feature>
<feature type="compositionally biased region" description="Low complexity" evidence="3">
    <location>
        <begin position="531"/>
        <end position="545"/>
    </location>
</feature>
<feature type="compositionally biased region" description="Basic and acidic residues" evidence="3">
    <location>
        <begin position="724"/>
        <end position="747"/>
    </location>
</feature>
<feature type="compositionally biased region" description="Low complexity" evidence="3">
    <location>
        <begin position="913"/>
        <end position="931"/>
    </location>
</feature>
<feature type="compositionally biased region" description="Low complexity" evidence="3">
    <location>
        <begin position="1015"/>
        <end position="1036"/>
    </location>
</feature>
<feature type="compositionally biased region" description="Basic and acidic residues" evidence="3">
    <location>
        <begin position="1106"/>
        <end position="1127"/>
    </location>
</feature>
<feature type="compositionally biased region" description="Low complexity" evidence="3">
    <location>
        <begin position="1151"/>
        <end position="1170"/>
    </location>
</feature>
<feature type="compositionally biased region" description="Basic and acidic residues" evidence="3">
    <location>
        <begin position="1224"/>
        <end position="1245"/>
    </location>
</feature>
<feature type="compositionally biased region" description="Basic and acidic residues" evidence="3">
    <location>
        <begin position="1496"/>
        <end position="1505"/>
    </location>
</feature>
<feature type="compositionally biased region" description="Basic and acidic residues" evidence="3">
    <location>
        <begin position="1517"/>
        <end position="1529"/>
    </location>
</feature>
<feature type="glycosylation site" description="N-linked (GlcNAc...) asparagine" evidence="1">
    <location>
        <position position="72"/>
    </location>
</feature>
<feature type="disulfide bond" description="Or C-1570 with C-1656" evidence="2">
    <location>
        <begin position="1570"/>
        <end position="1659"/>
    </location>
</feature>
<feature type="disulfide bond" description="Or C-1603 with C-1659" evidence="2">
    <location>
        <begin position="1603"/>
        <end position="1656"/>
    </location>
</feature>
<feature type="disulfide bond" evidence="2">
    <location>
        <begin position="1615"/>
        <end position="1621"/>
    </location>
</feature>
<feature type="disulfide bond" description="Or C-1678 with C-1771" evidence="2">
    <location>
        <begin position="1678"/>
        <end position="1774"/>
    </location>
</feature>
<feature type="disulfide bond" description="Or C-1712 with C-1774" evidence="2">
    <location>
        <begin position="1712"/>
        <end position="1771"/>
    </location>
</feature>
<feature type="disulfide bond" evidence="2">
    <location>
        <begin position="1724"/>
        <end position="1731"/>
    </location>
</feature>
<feature type="sequence conflict" description="In Ref. 1; AAA28404/AAA28423 and 2; AAB59184." evidence="6" ref="1 2">
    <original>K</original>
    <variation>E</variation>
    <location>
        <position position="383"/>
    </location>
</feature>
<feature type="sequence conflict" description="In Ref. 1; AAA28404/AAA28423 and 2; AAB59184." evidence="6" ref="1 2">
    <original>G</original>
    <variation>D</variation>
    <location>
        <position position="437"/>
    </location>
</feature>
<feature type="sequence conflict" description="In Ref. 6; CAA23486." evidence="6" ref="6">
    <original>L</original>
    <variation>S</variation>
    <location>
        <position position="948"/>
    </location>
</feature>
<feature type="sequence conflict" description="In Ref. 1; AAA28404/AAA28423 and 2; AAB59184." evidence="6" ref="1 2">
    <original>T</original>
    <variation>S</variation>
    <location>
        <position position="997"/>
    </location>
</feature>
<feature type="sequence conflict" description="In Ref. 1; AAA28404/AAA28423 and 2; AAB59184." evidence="6" ref="1 2">
    <original>AGEPG</original>
    <variation>PESR</variation>
    <location>
        <begin position="1329"/>
        <end position="1333"/>
    </location>
</feature>
<feature type="sequence conflict" description="In Ref. 8; AAA28422." evidence="6" ref="8">
    <original>Q</original>
    <variation>K</variation>
    <location>
        <position position="1358"/>
    </location>
</feature>
<feature type="sequence conflict" description="In Ref. 8; AAA28422." evidence="6" ref="8">
    <original>Q</original>
    <variation>K</variation>
    <location>
        <position position="1361"/>
    </location>
</feature>
<feature type="sequence conflict" description="In Ref. 8; AAA28422." evidence="6" ref="8">
    <original>T</original>
    <variation>I</variation>
    <location>
        <position position="1374"/>
    </location>
</feature>
<feature type="sequence conflict" description="In Ref. 8; AAA28422." evidence="6" ref="8">
    <original>N</original>
    <variation>T</variation>
    <location>
        <position position="1424"/>
    </location>
</feature>
<feature type="sequence conflict" description="In Ref. 1; AAA28404/AAA28423 and 2; AAB59184." evidence="6" ref="1 2">
    <original>R</original>
    <variation>L</variation>
    <location>
        <position position="1497"/>
    </location>
</feature>
<feature type="sequence conflict" description="In Ref. 8; AAA28422." evidence="6" ref="8">
    <original>ETGNV</original>
    <variation>RAGQR</variation>
    <location>
        <begin position="1508"/>
        <end position="1512"/>
    </location>
</feature>
<feature type="sequence conflict" description="In Ref. 8; AAA28422." evidence="6" ref="8">
    <original>E</original>
    <variation>K</variation>
    <location>
        <position position="1530"/>
    </location>
</feature>
<feature type="sequence conflict" description="In Ref. 1; AAA28404/AAA28423, 2; AAB59184 and 8; AAA28422." evidence="6" ref="1 2 8">
    <location>
        <begin position="1600"/>
        <end position="1602"/>
    </location>
</feature>
<feature type="sequence conflict" description="In Ref. 8; AAA28422." evidence="6" ref="8">
    <original>M</original>
    <variation>I</variation>
    <location>
        <position position="1737"/>
    </location>
</feature>
<feature type="strand" evidence="8">
    <location>
        <begin position="1556"/>
        <end position="1561"/>
    </location>
</feature>
<feature type="strand" evidence="8">
    <location>
        <begin position="1563"/>
        <end position="1566"/>
    </location>
</feature>
<feature type="strand" evidence="8">
    <location>
        <begin position="1574"/>
        <end position="1588"/>
    </location>
</feature>
<feature type="strand" evidence="8">
    <location>
        <begin position="1591"/>
        <end position="1594"/>
    </location>
</feature>
<feature type="helix" evidence="8">
    <location>
        <begin position="1600"/>
        <end position="1602"/>
    </location>
</feature>
<feature type="strand" evidence="8">
    <location>
        <begin position="1603"/>
        <end position="1606"/>
    </location>
</feature>
<feature type="strand" evidence="8">
    <location>
        <begin position="1612"/>
        <end position="1615"/>
    </location>
</feature>
<feature type="helix" evidence="8">
    <location>
        <begin position="1617"/>
        <end position="1619"/>
    </location>
</feature>
<feature type="strand" evidence="8">
    <location>
        <begin position="1620"/>
        <end position="1624"/>
    </location>
</feature>
<feature type="strand" evidence="8">
    <location>
        <begin position="1629"/>
        <end position="1633"/>
    </location>
</feature>
<feature type="helix" evidence="8">
    <location>
        <begin position="1646"/>
        <end position="1652"/>
    </location>
</feature>
<feature type="strand" evidence="8">
    <location>
        <begin position="1655"/>
        <end position="1663"/>
    </location>
</feature>
<feature type="strand" evidence="8">
    <location>
        <begin position="1665"/>
        <end position="1669"/>
    </location>
</feature>
<feature type="strand" evidence="8">
    <location>
        <begin position="1671"/>
        <end position="1674"/>
    </location>
</feature>
<feature type="strand" evidence="8">
    <location>
        <begin position="1683"/>
        <end position="1695"/>
    </location>
</feature>
<feature type="strand" evidence="8">
    <location>
        <begin position="1701"/>
        <end position="1703"/>
    </location>
</feature>
<feature type="strand" evidence="9">
    <location>
        <begin position="1706"/>
        <end position="1708"/>
    </location>
</feature>
<feature type="helix" evidence="8">
    <location>
        <begin position="1709"/>
        <end position="1711"/>
    </location>
</feature>
<feature type="strand" evidence="8">
    <location>
        <begin position="1712"/>
        <end position="1715"/>
    </location>
</feature>
<feature type="strand" evidence="8">
    <location>
        <begin position="1721"/>
        <end position="1725"/>
    </location>
</feature>
<feature type="turn" evidence="8">
    <location>
        <begin position="1726"/>
        <end position="1729"/>
    </location>
</feature>
<feature type="strand" evidence="8">
    <location>
        <begin position="1730"/>
        <end position="1732"/>
    </location>
</feature>
<feature type="strand" evidence="8">
    <location>
        <begin position="1738"/>
        <end position="1743"/>
    </location>
</feature>
<feature type="strand" evidence="8">
    <location>
        <begin position="1757"/>
        <end position="1760"/>
    </location>
</feature>
<feature type="helix" evidence="8">
    <location>
        <begin position="1761"/>
        <end position="1763"/>
    </location>
</feature>
<feature type="helix" evidence="8">
    <location>
        <begin position="1765"/>
        <end position="1767"/>
    </location>
</feature>
<feature type="strand" evidence="8">
    <location>
        <begin position="1770"/>
        <end position="1775"/>
    </location>
</feature>
<gene>
    <name evidence="7" type="primary">Col4a1</name>
    <name evidence="7" type="synonym">Cg25C</name>
    <name evidence="5" type="synonym">DCg1</name>
    <name evidence="7" type="ORF">CG4145</name>
</gene>
<accession>P08120</accession>
<accession>A4V070</accession>
<accession>Q9VMV4</accession>
<evidence type="ECO:0000255" key="1">
    <source>
        <dbReference type="PROSITE-ProRule" id="PRU00498"/>
    </source>
</evidence>
<evidence type="ECO:0000255" key="2">
    <source>
        <dbReference type="PROSITE-ProRule" id="PRU00736"/>
    </source>
</evidence>
<evidence type="ECO:0000256" key="3">
    <source>
        <dbReference type="SAM" id="MobiDB-lite"/>
    </source>
</evidence>
<evidence type="ECO:0000303" key="4">
    <source>
    </source>
</evidence>
<evidence type="ECO:0000303" key="5">
    <source>
    </source>
</evidence>
<evidence type="ECO:0000305" key="6"/>
<evidence type="ECO:0000312" key="7">
    <source>
        <dbReference type="FlyBase" id="FBgn0000299"/>
    </source>
</evidence>
<evidence type="ECO:0007829" key="8">
    <source>
        <dbReference type="PDB" id="8TXN"/>
    </source>
</evidence>
<evidence type="ECO:0007829" key="9">
    <source>
        <dbReference type="PDB" id="8TYS"/>
    </source>
</evidence>
<name>CO4A1_DROME</name>
<reference key="1">
    <citation type="journal article" date="1988" name="J. Biol. Chem.">
        <title>Drosophila basement membrane procollagen alpha 1(IV). II. Complete cDNA sequence, genomic structure, and general implications for supramolecular assemblies.</title>
        <authorList>
            <person name="Blumberg B."/>
            <person name="Mackrell A.J."/>
            <person name="Fessler J.H."/>
        </authorList>
    </citation>
    <scope>NUCLEOTIDE SEQUENCE [MRNA]</scope>
    <source>
        <strain>Oregon-R</strain>
    </source>
</reference>
<reference key="2">
    <citation type="thesis" date="1987" institute="University of California Los Angeles" country="United States">
        <authorList>
            <person name="Blumberg B."/>
        </authorList>
    </citation>
    <scope>NUCLEOTIDE SEQUENCE [GENOMIC DNA]</scope>
</reference>
<reference key="3">
    <citation type="thesis" date="1992" institute="University of California Los Angeles" country="United States">
        <authorList>
            <person name="Mackrell A.J."/>
        </authorList>
    </citation>
    <scope>NUCLEOTIDE SEQUENCE [GENOMIC DNA]</scope>
</reference>
<reference key="4">
    <citation type="journal article" date="2000" name="Science">
        <title>The genome sequence of Drosophila melanogaster.</title>
        <authorList>
            <person name="Adams M.D."/>
            <person name="Celniker S.E."/>
            <person name="Holt R.A."/>
            <person name="Evans C.A."/>
            <person name="Gocayne J.D."/>
            <person name="Amanatides P.G."/>
            <person name="Scherer S.E."/>
            <person name="Li P.W."/>
            <person name="Hoskins R.A."/>
            <person name="Galle R.F."/>
            <person name="George R.A."/>
            <person name="Lewis S.E."/>
            <person name="Richards S."/>
            <person name="Ashburner M."/>
            <person name="Henderson S.N."/>
            <person name="Sutton G.G."/>
            <person name="Wortman J.R."/>
            <person name="Yandell M.D."/>
            <person name="Zhang Q."/>
            <person name="Chen L.X."/>
            <person name="Brandon R.C."/>
            <person name="Rogers Y.-H.C."/>
            <person name="Blazej R.G."/>
            <person name="Champe M."/>
            <person name="Pfeiffer B.D."/>
            <person name="Wan K.H."/>
            <person name="Doyle C."/>
            <person name="Baxter E.G."/>
            <person name="Helt G."/>
            <person name="Nelson C.R."/>
            <person name="Miklos G.L.G."/>
            <person name="Abril J.F."/>
            <person name="Agbayani A."/>
            <person name="An H.-J."/>
            <person name="Andrews-Pfannkoch C."/>
            <person name="Baldwin D."/>
            <person name="Ballew R.M."/>
            <person name="Basu A."/>
            <person name="Baxendale J."/>
            <person name="Bayraktaroglu L."/>
            <person name="Beasley E.M."/>
            <person name="Beeson K.Y."/>
            <person name="Benos P.V."/>
            <person name="Berman B.P."/>
            <person name="Bhandari D."/>
            <person name="Bolshakov S."/>
            <person name="Borkova D."/>
            <person name="Botchan M.R."/>
            <person name="Bouck J."/>
            <person name="Brokstein P."/>
            <person name="Brottier P."/>
            <person name="Burtis K.C."/>
            <person name="Busam D.A."/>
            <person name="Butler H."/>
            <person name="Cadieu E."/>
            <person name="Center A."/>
            <person name="Chandra I."/>
            <person name="Cherry J.M."/>
            <person name="Cawley S."/>
            <person name="Dahlke C."/>
            <person name="Davenport L.B."/>
            <person name="Davies P."/>
            <person name="de Pablos B."/>
            <person name="Delcher A."/>
            <person name="Deng Z."/>
            <person name="Mays A.D."/>
            <person name="Dew I."/>
            <person name="Dietz S.M."/>
            <person name="Dodson K."/>
            <person name="Doup L.E."/>
            <person name="Downes M."/>
            <person name="Dugan-Rocha S."/>
            <person name="Dunkov B.C."/>
            <person name="Dunn P."/>
            <person name="Durbin K.J."/>
            <person name="Evangelista C.C."/>
            <person name="Ferraz C."/>
            <person name="Ferriera S."/>
            <person name="Fleischmann W."/>
            <person name="Fosler C."/>
            <person name="Gabrielian A.E."/>
            <person name="Garg N.S."/>
            <person name="Gelbart W.M."/>
            <person name="Glasser K."/>
            <person name="Glodek A."/>
            <person name="Gong F."/>
            <person name="Gorrell J.H."/>
            <person name="Gu Z."/>
            <person name="Guan P."/>
            <person name="Harris M."/>
            <person name="Harris N.L."/>
            <person name="Harvey D.A."/>
            <person name="Heiman T.J."/>
            <person name="Hernandez J.R."/>
            <person name="Houck J."/>
            <person name="Hostin D."/>
            <person name="Houston K.A."/>
            <person name="Howland T.J."/>
            <person name="Wei M.-H."/>
            <person name="Ibegwam C."/>
            <person name="Jalali M."/>
            <person name="Kalush F."/>
            <person name="Karpen G.H."/>
            <person name="Ke Z."/>
            <person name="Kennison J.A."/>
            <person name="Ketchum K.A."/>
            <person name="Kimmel B.E."/>
            <person name="Kodira C.D."/>
            <person name="Kraft C.L."/>
            <person name="Kravitz S."/>
            <person name="Kulp D."/>
            <person name="Lai Z."/>
            <person name="Lasko P."/>
            <person name="Lei Y."/>
            <person name="Levitsky A.A."/>
            <person name="Li J.H."/>
            <person name="Li Z."/>
            <person name="Liang Y."/>
            <person name="Lin X."/>
            <person name="Liu X."/>
            <person name="Mattei B."/>
            <person name="McIntosh T.C."/>
            <person name="McLeod M.P."/>
            <person name="McPherson D."/>
            <person name="Merkulov G."/>
            <person name="Milshina N.V."/>
            <person name="Mobarry C."/>
            <person name="Morris J."/>
            <person name="Moshrefi A."/>
            <person name="Mount S.M."/>
            <person name="Moy M."/>
            <person name="Murphy B."/>
            <person name="Murphy L."/>
            <person name="Muzny D.M."/>
            <person name="Nelson D.L."/>
            <person name="Nelson D.R."/>
            <person name="Nelson K.A."/>
            <person name="Nixon K."/>
            <person name="Nusskern D.R."/>
            <person name="Pacleb J.M."/>
            <person name="Palazzolo M."/>
            <person name="Pittman G.S."/>
            <person name="Pan S."/>
            <person name="Pollard J."/>
            <person name="Puri V."/>
            <person name="Reese M.G."/>
            <person name="Reinert K."/>
            <person name="Remington K."/>
            <person name="Saunders R.D.C."/>
            <person name="Scheeler F."/>
            <person name="Shen H."/>
            <person name="Shue B.C."/>
            <person name="Siden-Kiamos I."/>
            <person name="Simpson M."/>
            <person name="Skupski M.P."/>
            <person name="Smith T.J."/>
            <person name="Spier E."/>
            <person name="Spradling A.C."/>
            <person name="Stapleton M."/>
            <person name="Strong R."/>
            <person name="Sun E."/>
            <person name="Svirskas R."/>
            <person name="Tector C."/>
            <person name="Turner R."/>
            <person name="Venter E."/>
            <person name="Wang A.H."/>
            <person name="Wang X."/>
            <person name="Wang Z.-Y."/>
            <person name="Wassarman D.A."/>
            <person name="Weinstock G.M."/>
            <person name="Weissenbach J."/>
            <person name="Williams S.M."/>
            <person name="Woodage T."/>
            <person name="Worley K.C."/>
            <person name="Wu D."/>
            <person name="Yang S."/>
            <person name="Yao Q.A."/>
            <person name="Ye J."/>
            <person name="Yeh R.-F."/>
            <person name="Zaveri J.S."/>
            <person name="Zhan M."/>
            <person name="Zhang G."/>
            <person name="Zhao Q."/>
            <person name="Zheng L."/>
            <person name="Zheng X.H."/>
            <person name="Zhong F.N."/>
            <person name="Zhong W."/>
            <person name="Zhou X."/>
            <person name="Zhu S.C."/>
            <person name="Zhu X."/>
            <person name="Smith H.O."/>
            <person name="Gibbs R.A."/>
            <person name="Myers E.W."/>
            <person name="Rubin G.M."/>
            <person name="Venter J.C."/>
        </authorList>
    </citation>
    <scope>NUCLEOTIDE SEQUENCE [LARGE SCALE GENOMIC DNA]</scope>
    <source>
        <strain>Berkeley</strain>
    </source>
</reference>
<reference key="5">
    <citation type="journal article" date="2002" name="Genome Biol.">
        <title>Annotation of the Drosophila melanogaster euchromatic genome: a systematic review.</title>
        <authorList>
            <person name="Misra S."/>
            <person name="Crosby M.A."/>
            <person name="Mungall C.J."/>
            <person name="Matthews B.B."/>
            <person name="Campbell K.S."/>
            <person name="Hradecky P."/>
            <person name="Huang Y."/>
            <person name="Kaminker J.S."/>
            <person name="Millburn G.H."/>
            <person name="Prochnik S.E."/>
            <person name="Smith C.D."/>
            <person name="Tupy J.L."/>
            <person name="Whitfield E.J."/>
            <person name="Bayraktaroglu L."/>
            <person name="Berman B.P."/>
            <person name="Bettencourt B.R."/>
            <person name="Celniker S.E."/>
            <person name="de Grey A.D.N.J."/>
            <person name="Drysdale R.A."/>
            <person name="Harris N.L."/>
            <person name="Richter J."/>
            <person name="Russo S."/>
            <person name="Schroeder A.J."/>
            <person name="Shu S.Q."/>
            <person name="Stapleton M."/>
            <person name="Yamada C."/>
            <person name="Ashburner M."/>
            <person name="Gelbart W.M."/>
            <person name="Rubin G.M."/>
            <person name="Lewis S.E."/>
        </authorList>
    </citation>
    <scope>GENOME REANNOTATION</scope>
    <source>
        <strain>Berkeley</strain>
    </source>
</reference>
<reference key="6">
    <citation type="journal article" date="1982" name="Proc. Natl. Acad. Sci. U.S.A.">
        <title>Expression and novel structure of a collagen gene in Drosophila.</title>
        <authorList>
            <person name="Monson J.M."/>
            <person name="Natzle J.E."/>
            <person name="Friedman J."/>
            <person name="McCarthy B.J."/>
        </authorList>
    </citation>
    <scope>NUCLEOTIDE SEQUENCE [GENOMIC DNA] OF 762-1230</scope>
</reference>
<reference key="7">
    <citation type="journal article" date="1987" name="J. Biol. Chem.">
        <title>Basement membrane procollagen IV and its specialized carboxyl domain are conserved in Drosophila, mouse, and human.</title>
        <authorList>
            <person name="Blumberg B."/>
            <person name="Mackrell A.J."/>
            <person name="Olson P.F."/>
            <person name="Kurkinen M."/>
            <person name="Monson J.M."/>
            <person name="Natzle J.E."/>
            <person name="Fessler J.H."/>
        </authorList>
    </citation>
    <scope>NUCLEOTIDE SEQUENCE [MRNA] OF 1065-1779</scope>
</reference>
<reference key="8">
    <citation type="journal article" date="1987" name="Eur. J. Biochem.">
        <title>Evidence for a type-IV-related collagen in Drosophila melanogaster. Evolutionary constancy of the carboxyl-terminal noncollagenous domain.</title>
        <authorList>
            <person name="Cecchini J.-P."/>
            <person name="Knibiehler B."/>
            <person name="Mirre C."/>
            <person name="le Parco Y."/>
        </authorList>
    </citation>
    <scope>NUCLEOTIDE SEQUENCE [MRNA] OF 1356-1779</scope>
    <source>
        <tissue>Larva</tissue>
    </source>
</reference>
<sequence>MLPFWKRLLYAAVIAGALVGADAQFWKTAGTAGSIQDSVKHYNRNEPKFPIDDSYDIVDSAGVARGDLPPKNCTAGYAGCVPKCIAEKGNRGLPGPLGPTGLKGEMGFPGMEGPSGDKGQKGDPGPYGQRGDKGERGSPGLHGQAGVPGVQGPAGNPGAPGINGKDGCDGQDGIPGLEGLSGMPGPRGYAGQLGSKGEKGEPAKENGDYAKGEKGEPGWRGTAGLAGPQGFPGEKGERGDSGPYGAKGPRGEHGLKGEKGASCYGPMKPGAPGIKGEKGEPASSFPVKPTHTVMGPRGDMGQKGEPGLVGRKGEPGPEGDTGLDGQKGEKGLPGGPGDRGRQGNFGPPGSTGQKGDRGEPGLNGLPGNPGQKGEPGRAGATGKPGLLGPPGPPGGGRGTPGPPGPKGPRGYVGAPGPQGLNGVDGLPGPQGYNGQKGGAGLPGRPGNEGPPGKKGEKGTAGLNGPKGSIGPIGHPGPPGPEGQKGDAGLPGYGIQGSKGDAGIPGYPGLKGSKGERGFKGNAGAPGDSKLGRPGTPGAAGAPGQKGDAGRPGTPGQKGDMGIKGDVGGKCSSCRAGPKGDKGTSGLPGIPGKDGARGPPGERGYPGERGHDGINGQTGPPGEKGEDGRTGLPGATGEPGKPALCDLSLIEPLKGDKGYPGAPGAKGVQGFKGAEGLPGIPGPKGEFGFKGEKGLSGAPGNDGTPGRAGRDGYPGIPGQSIKGEPGFHGRDGAKGDKGSFGRSGEKGEPGSCALDEIKMPAKGNKGEPGQTGMPGPPGEDGSPGERGYTGLKGNTGPQGPPGVEGPRGLNGPRGEKGNQGAVGVPGNPGKDGLRGIPGRNGQPGPRGEPGISRPGPMGPPGLNGLQGEKGDRGPTGPIGFPGADGSVGYPGDRGDAGLPGVSGRPGIVGEKGDVGPIGPAGVAGPPGVPGIDGVRGRDGAKGEPGSPGLVGMPGNKGDRGAPGNDGPKGFAGVTGAPGKRGPAGIPGVSGAKGDKGATGLTGNDGPVGGRGPPGAPGLMGIKGDQGLAGAPGQQGLDGMPGEKGNQGFPGLDGPPGLPGDASEKGQKGEPGPSGLRGDTGPAGTPGWPGEKGLPGLAVHGRAGPPGEKGDQGRSGIDGRDGINGEKGEQGLQGVWGQPGEKGSVGAPGIPGAPGMDGLPGAAGAPGAVGYPGDRGDKGEPGLSGLPGLKGETGPVGLQGFTGAPGPKGERGIRGQPGLPATVPDIRGDKGSQGERGYTGEKGEQGERGLTGPAGVAGAKGDRGLQGPPGASGLNGIPGAKGDIGPRGEIGYPGVTIKGEKGLPGRPGRNGRQGLIGAPGLIGERGLPGLAGEPGLVGLPGPIGPAGSKGERGLAGSPGQPGQDGFPGAPGLKGDTGPQGFKGERGLNGFEGQKGDKGDRGLQGPSGLPGLVGQKGDTGYPGLNGNDGPVGAPGERGFTGPKGRDGRDGTPGLPGQKGEPGMLPPPGPKGEPGQPGRNGPKGEPGRPGERGLIGIQGERGEKGERGLIGETGNVGRPGPKGDRGEPGERGYEGAIGLIGQKGEPGAPAPAALDYLTGILITRHSQSETVPACSAGHTELWTGYSLLYVDGNDYAHNQDLGSPGSCVPRFSTLPVLSCGQNNVCNYASRNDKTFWLTTNAAIPMMPVENIEIRQYISRCVVCEAPANVIAVHSQTIEVPDCPNGWEGLWIGYSFLMHTAVGNGGGGQALQSPGSCLEDFRATPFIECNGAKGTCHFYETMTSFWMYNLESSQPFERPQQQTIKAGERQSHVSRCQVCMKNSS</sequence>